<dbReference type="EC" id="3.4.11.20" evidence="6 7"/>
<dbReference type="EMBL" id="D87992">
    <property type="protein sequence ID" value="BAA24263.1"/>
    <property type="molecule type" value="mRNA"/>
</dbReference>
<dbReference type="EMBL" id="GU223212">
    <property type="protein sequence ID" value="ACZ95799.1"/>
    <property type="molecule type" value="mRNA"/>
</dbReference>
<dbReference type="EMBL" id="AADN04000131">
    <property type="status" value="NOT_ANNOTATED_CDS"/>
    <property type="molecule type" value="Genomic_DNA"/>
</dbReference>
<dbReference type="RefSeq" id="NP_990192.1">
    <property type="nucleotide sequence ID" value="NM_204861.1"/>
</dbReference>
<dbReference type="RefSeq" id="XP_015147557.1">
    <property type="nucleotide sequence ID" value="XM_015292071.1"/>
</dbReference>
<dbReference type="SMR" id="O57579"/>
<dbReference type="FunCoup" id="O57579">
    <property type="interactions" value="1049"/>
</dbReference>
<dbReference type="STRING" id="9031.ENSGALP00000044885"/>
<dbReference type="MEROPS" id="M01.016"/>
<dbReference type="GlyCosmos" id="O57579">
    <property type="glycosylation" value="14 sites, No reported glycans"/>
</dbReference>
<dbReference type="GlyGen" id="O57579">
    <property type="glycosylation" value="14 sites"/>
</dbReference>
<dbReference type="PaxDb" id="9031-ENSGALP00000040682"/>
<dbReference type="GeneID" id="395667"/>
<dbReference type="KEGG" id="gga:395667"/>
<dbReference type="CTD" id="290"/>
<dbReference type="VEuPathDB" id="HostDB:geneid_395667"/>
<dbReference type="eggNOG" id="KOG1046">
    <property type="taxonomic scope" value="Eukaryota"/>
</dbReference>
<dbReference type="InParanoid" id="O57579"/>
<dbReference type="OrthoDB" id="510539at2759"/>
<dbReference type="PhylomeDB" id="O57579"/>
<dbReference type="BRENDA" id="3.4.11.20">
    <property type="organism ID" value="1306"/>
</dbReference>
<dbReference type="Reactome" id="R-GGA-6798695">
    <property type="pathway name" value="Neutrophil degranulation"/>
</dbReference>
<dbReference type="SABIO-RK" id="O57579"/>
<dbReference type="PRO" id="PR:O57579"/>
<dbReference type="Proteomes" id="UP000000539">
    <property type="component" value="Chromosome 10"/>
</dbReference>
<dbReference type="Bgee" id="ENSGALG00000027501">
    <property type="expression patterns" value="Expressed in liver and 11 other cell types or tissues"/>
</dbReference>
<dbReference type="GO" id="GO:0005737">
    <property type="term" value="C:cytoplasm"/>
    <property type="evidence" value="ECO:0000318"/>
    <property type="project" value="GO_Central"/>
</dbReference>
<dbReference type="GO" id="GO:0005615">
    <property type="term" value="C:extracellular space"/>
    <property type="evidence" value="ECO:0000318"/>
    <property type="project" value="GO_Central"/>
</dbReference>
<dbReference type="GO" id="GO:0005886">
    <property type="term" value="C:plasma membrane"/>
    <property type="evidence" value="ECO:0000250"/>
    <property type="project" value="UniProtKB"/>
</dbReference>
<dbReference type="GO" id="GO:0070006">
    <property type="term" value="F:metalloaminopeptidase activity"/>
    <property type="evidence" value="ECO:0000318"/>
    <property type="project" value="GO_Central"/>
</dbReference>
<dbReference type="GO" id="GO:0042277">
    <property type="term" value="F:peptide binding"/>
    <property type="evidence" value="ECO:0000318"/>
    <property type="project" value="GO_Central"/>
</dbReference>
<dbReference type="GO" id="GO:0008270">
    <property type="term" value="F:zinc ion binding"/>
    <property type="evidence" value="ECO:0000318"/>
    <property type="project" value="GO_Central"/>
</dbReference>
<dbReference type="GO" id="GO:0043171">
    <property type="term" value="P:peptide catabolic process"/>
    <property type="evidence" value="ECO:0000318"/>
    <property type="project" value="GO_Central"/>
</dbReference>
<dbReference type="GO" id="GO:0006508">
    <property type="term" value="P:proteolysis"/>
    <property type="evidence" value="ECO:0000318"/>
    <property type="project" value="GO_Central"/>
</dbReference>
<dbReference type="CDD" id="cd09601">
    <property type="entry name" value="M1_APN-Q_like"/>
    <property type="match status" value="1"/>
</dbReference>
<dbReference type="FunFam" id="2.60.40.1910:FF:000005">
    <property type="entry name" value="Aminopeptidase"/>
    <property type="match status" value="1"/>
</dbReference>
<dbReference type="FunFam" id="1.25.50.20:FF:000012">
    <property type="entry name" value="Aminopeptidase N"/>
    <property type="match status" value="1"/>
</dbReference>
<dbReference type="FunFam" id="1.10.390.10:FF:000016">
    <property type="entry name" value="Glutamyl aminopeptidase"/>
    <property type="match status" value="1"/>
</dbReference>
<dbReference type="FunFam" id="2.60.40.1730:FF:000001">
    <property type="entry name" value="Leucyl-cystinyl aminopeptidase"/>
    <property type="match status" value="1"/>
</dbReference>
<dbReference type="Gene3D" id="1.25.50.20">
    <property type="match status" value="1"/>
</dbReference>
<dbReference type="Gene3D" id="2.60.40.1910">
    <property type="match status" value="1"/>
</dbReference>
<dbReference type="Gene3D" id="1.10.390.10">
    <property type="entry name" value="Neutral Protease Domain 2"/>
    <property type="match status" value="1"/>
</dbReference>
<dbReference type="Gene3D" id="2.60.40.1730">
    <property type="entry name" value="tricorn interacting facor f3 domain"/>
    <property type="match status" value="1"/>
</dbReference>
<dbReference type="InterPro" id="IPR045357">
    <property type="entry name" value="Aminopeptidase_N-like_N"/>
</dbReference>
<dbReference type="InterPro" id="IPR042097">
    <property type="entry name" value="Aminopeptidase_N-like_N_sf"/>
</dbReference>
<dbReference type="InterPro" id="IPR024571">
    <property type="entry name" value="ERAP1-like_C_dom"/>
</dbReference>
<dbReference type="InterPro" id="IPR034016">
    <property type="entry name" value="M1_APN-typ"/>
</dbReference>
<dbReference type="InterPro" id="IPR001930">
    <property type="entry name" value="Peptidase_M1"/>
</dbReference>
<dbReference type="InterPro" id="IPR050344">
    <property type="entry name" value="Peptidase_M1_aminopeptidases"/>
</dbReference>
<dbReference type="InterPro" id="IPR014782">
    <property type="entry name" value="Peptidase_M1_dom"/>
</dbReference>
<dbReference type="InterPro" id="IPR027268">
    <property type="entry name" value="Peptidase_M4/M1_CTD_sf"/>
</dbReference>
<dbReference type="PANTHER" id="PTHR11533:SF172">
    <property type="entry name" value="AMINOPEPTIDASE N"/>
    <property type="match status" value="1"/>
</dbReference>
<dbReference type="PANTHER" id="PTHR11533">
    <property type="entry name" value="PROTEASE M1 ZINC METALLOPROTEASE"/>
    <property type="match status" value="1"/>
</dbReference>
<dbReference type="Pfam" id="PF11838">
    <property type="entry name" value="ERAP1_C"/>
    <property type="match status" value="1"/>
</dbReference>
<dbReference type="Pfam" id="PF01433">
    <property type="entry name" value="Peptidase_M1"/>
    <property type="match status" value="1"/>
</dbReference>
<dbReference type="Pfam" id="PF17900">
    <property type="entry name" value="Peptidase_M1_N"/>
    <property type="match status" value="1"/>
</dbReference>
<dbReference type="PRINTS" id="PR00756">
    <property type="entry name" value="ALADIPTASE"/>
</dbReference>
<dbReference type="SUPFAM" id="SSF63737">
    <property type="entry name" value="Leukotriene A4 hydrolase N-terminal domain"/>
    <property type="match status" value="1"/>
</dbReference>
<dbReference type="SUPFAM" id="SSF55486">
    <property type="entry name" value="Metalloproteases ('zincins'), catalytic domain"/>
    <property type="match status" value="1"/>
</dbReference>
<dbReference type="PROSITE" id="PS00142">
    <property type="entry name" value="ZINC_PROTEASE"/>
    <property type="match status" value="1"/>
</dbReference>
<accession>O57579</accession>
<accession>A0A1D5NWZ2</accession>
<accession>D2KKL5</accession>
<name>AMPN_CHICK</name>
<proteinExistence type="evidence at protein level"/>
<comment type="function">
    <text evidence="6 7 10">Broad specificity aminopeptidase. Degrades a variety of peptides possessing various N-terminal amino acids including hydrophobic, basic and acidic amino acids. Preferentially hydrolyzes small peptides consisting of 4 or 5 amino acids. Hydrolyzes the N-terminal Xaa-Pro bonds in the chicken brain peptide Leu-Pro-Leu-Arg-PheNH2, the substance P fragment Arg-Pro-Lys-Pro and the bradykinin fragment Arg-Pro-Pro-Gly-Phe. Hydrolyzes the N-formylated peptides fMet-Leu-Phe, fMet-Ala-Gly-Ser-Glu and fMet-Nle-Leu-Phe-Nle-Tyr-Lys, but does not hydrolyze peptides with acetylation or pyroglutamic acid at N-terminus. Does not hydrolyze large peptides such as complete substance P, bradykinin or schistoFLRFamide.</text>
</comment>
<comment type="catalytic activity">
    <reaction evidence="6 7">
        <text>Differs from other aminopeptidases in broad specificity for amino acids in the P1 position and the ability to hydrolyze peptides of four or five residues that contain Pro in the P1' position.</text>
        <dbReference type="EC" id="3.4.11.20"/>
    </reaction>
</comment>
<comment type="cofactor">
    <cofactor evidence="8">
        <name>Zn(2+)</name>
        <dbReference type="ChEBI" id="CHEBI:29105"/>
    </cofactor>
    <text evidence="8">Binds 1 zinc ion per subunit.</text>
</comment>
<comment type="biophysicochemical properties">
    <kinetics>
        <KM evidence="6 7">0.58 mM for Leu-Pro-Leu-Arg-PheNH2</KM>
        <KM evidence="6 7">1.23 mM for fMet-Leu-Phe</KM>
        <KM evidence="6 7">1.53 mM for fMet-Ala-Gly-Ser-Glu</KM>
        <KM evidence="6 7">1.72 mM for fMet-Nle-Leu-Phe-Nle-Tyr-Lys</KM>
    </kinetics>
</comment>
<comment type="subunit">
    <text evidence="11">Homodimer.</text>
</comment>
<comment type="subcellular location">
    <subcellularLocation>
        <location evidence="10">Cell membrane</location>
        <topology evidence="2">Single-pass type II membrane protein</topology>
    </subcellularLocation>
    <text evidence="10">Also found as a soluble form.</text>
</comment>
<comment type="tissue specificity">
    <text evidence="10">Detected in the plasma and granule fractions of egg yolk (at protein level).</text>
</comment>
<comment type="similarity">
    <text evidence="3">Belongs to the peptidase M1 family.</text>
</comment>
<sequence length="972" mass="109132">MAAGFFISKSVGIVGIVLALGAVATIIALSVVYAQEKNKSSGGSGGSDTTSTTTASTTTTSTTTASTTAAPNNPWNRWRLPTALKPESYEVTLQPFLTPDDNNMYIFKGNSSVVFLCEEATDLILIHSNKLNYTLQGGFHASLHAVNGSTPPTISNTWLETNTQYLVLQLAGPLQQGQHYRLFSIFTGELADDLAGFYRSEYTEGNVTKVVATTQMQAPDARKAFPCFDEPAMKAVFTVTMIHPSDHTAISNMPVHSTYQLQMDGQSWNVTQFDPTPRMSTYLLAFIVSQFDYVENNTGKVQIRIWGRPAAIAEGQGEYALEKTGPILSFFERHYNTAYPLPKSDQVGLPDFNAGAMENWGLVTYRENSLLYDNAYSSIGNKERVVTVIAHELAHQWFGNLVTLRWWNDLWLNEGFASYVEYLGADSAEPTWDIKDLMVLNELYTVMATDALTTSHPLTFREDEINTPAQISEVFDSIAYSKGASVLRMLSDFLTEDVFKEGLQSYLHDFSYNNTVYTDLWDHLQEAVNKNSVPLPDSIGAIMDRWTLQMGFPVVTVNTLTGSVQQSHFLLDSNSTVERPSVFNYTWIVPITWMTPSRTGDRYWLVDVSATNSDFSVGSSTWLLLNLNVSGYFRVNYNQENWDQLLQQLSNNHQAIPVINRAQIIDDAFNLARAQQVSVTLALNTTRFLSGETAYMPWQAALNNLQYFQLMFDRSEVFGAMTKYIQKQVTPLFEYYRTATNNWTAIPSALMDQYNEINAISTACSYGIAECQQLATALYQQWRQNVSNNPIAPNLRSAIYCSAVATGGEEVWDFIWERFLEAPVVSEADKLRTALTCSTETWILQRYLQYTIDPTKIRKQDATSTINSIASNVVGQPLAWDFIRSNWRTLFGQYGGGSFSFSRLISAVTQRFNTEFELKQLEQFKADNQDIGFGSGTRALEQALERTRTNINWVKENKEVVHAWFRAETASS</sequence>
<organism>
    <name type="scientific">Gallus gallus</name>
    <name type="common">Chicken</name>
    <dbReference type="NCBI Taxonomy" id="9031"/>
    <lineage>
        <taxon>Eukaryota</taxon>
        <taxon>Metazoa</taxon>
        <taxon>Chordata</taxon>
        <taxon>Craniata</taxon>
        <taxon>Vertebrata</taxon>
        <taxon>Euteleostomi</taxon>
        <taxon>Archelosauria</taxon>
        <taxon>Archosauria</taxon>
        <taxon>Dinosauria</taxon>
        <taxon>Saurischia</taxon>
        <taxon>Theropoda</taxon>
        <taxon>Coelurosauria</taxon>
        <taxon>Aves</taxon>
        <taxon>Neognathae</taxon>
        <taxon>Galloanserae</taxon>
        <taxon>Galliformes</taxon>
        <taxon>Phasianidae</taxon>
        <taxon>Phasianinae</taxon>
        <taxon>Gallus</taxon>
    </lineage>
</organism>
<gene>
    <name type="primary">ANPEP</name>
    <name type="synonym">APDE</name>
</gene>
<keyword id="KW-0031">Aminopeptidase</keyword>
<keyword id="KW-1003">Cell membrane</keyword>
<keyword id="KW-0903">Direct protein sequencing</keyword>
<keyword id="KW-1015">Disulfide bond</keyword>
<keyword id="KW-0325">Glycoprotein</keyword>
<keyword id="KW-0378">Hydrolase</keyword>
<keyword id="KW-0472">Membrane</keyword>
<keyword id="KW-0479">Metal-binding</keyword>
<keyword id="KW-0482">Metalloprotease</keyword>
<keyword id="KW-0645">Protease</keyword>
<keyword id="KW-1185">Reference proteome</keyword>
<keyword id="KW-0735">Signal-anchor</keyword>
<keyword id="KW-0812">Transmembrane</keyword>
<keyword id="KW-1133">Transmembrane helix</keyword>
<keyword id="KW-0862">Zinc</keyword>
<protein>
    <recommendedName>
        <fullName evidence="12">Aminopeptidase Ey</fullName>
        <ecNumber evidence="6 7">3.4.11.20</ecNumber>
    </recommendedName>
    <alternativeName>
        <fullName evidence="14">Aminopeptidase N</fullName>
    </alternativeName>
</protein>
<evidence type="ECO:0000250" key="1"/>
<evidence type="ECO:0000250" key="2">
    <source>
        <dbReference type="UniProtKB" id="P15144"/>
    </source>
</evidence>
<evidence type="ECO:0000255" key="3"/>
<evidence type="ECO:0000255" key="4">
    <source>
        <dbReference type="PROSITE-ProRule" id="PRU10095"/>
    </source>
</evidence>
<evidence type="ECO:0000256" key="5">
    <source>
        <dbReference type="SAM" id="MobiDB-lite"/>
    </source>
</evidence>
<evidence type="ECO:0000269" key="6">
    <source>
    </source>
</evidence>
<evidence type="ECO:0000269" key="7">
    <source>
    </source>
</evidence>
<evidence type="ECO:0000269" key="8">
    <source>
    </source>
</evidence>
<evidence type="ECO:0000269" key="9">
    <source>
    </source>
</evidence>
<evidence type="ECO:0000269" key="10">
    <source ref="4"/>
</evidence>
<evidence type="ECO:0000269" key="11">
    <source ref="5"/>
</evidence>
<evidence type="ECO:0000303" key="12">
    <source>
    </source>
</evidence>
<evidence type="ECO:0000305" key="13"/>
<evidence type="ECO:0000312" key="14">
    <source>
        <dbReference type="EMBL" id="ACZ95799.1"/>
    </source>
</evidence>
<reference key="1">
    <citation type="journal article" date="1998" name="Comp. Biochem. Physiol.">
        <title>Isolation and characterization of cDNA encoding chicken egg yolk aminopeptidase Ey.</title>
        <authorList>
            <person name="Midorikawa T."/>
            <person name="Abe R."/>
            <person name="Yamagata Y."/>
            <person name="Nakajima T."/>
            <person name="Ichishima E."/>
        </authorList>
    </citation>
    <scope>NUCLEOTIDE SEQUENCE [MRNA]</scope>
    <scope>PROTEIN SEQUENCE OF 224-234; 296-363; 378-405; 496-526 AND 954-966</scope>
    <source>
        <tissue evidence="9">Egg yolk</tissue>
        <tissue evidence="9">Liver</tissue>
    </source>
</reference>
<reference key="2">
    <citation type="submission" date="2009-11" db="EMBL/GenBank/DDBJ databases">
        <title>Soluble high-expression and biological function of chicken aminopeptidase N.</title>
        <authorList>
            <person name="Xin Y."/>
            <person name="Ping W."/>
            <person name="Bo M.X."/>
        </authorList>
    </citation>
    <scope>NUCLEOTIDE SEQUENCE [MRNA]</scope>
    <source>
        <tissue evidence="14">Embryonic kidney</tissue>
    </source>
</reference>
<reference key="3">
    <citation type="journal article" date="2004" name="Nature">
        <title>Sequence and comparative analysis of the chicken genome provide unique perspectives on vertebrate evolution.</title>
        <authorList>
            <person name="Hillier L.W."/>
            <person name="Miller W."/>
            <person name="Birney E."/>
            <person name="Warren W."/>
            <person name="Hardison R.C."/>
            <person name="Ponting C.P."/>
            <person name="Bork P."/>
            <person name="Burt D.W."/>
            <person name="Groenen M.A.M."/>
            <person name="Delany M.E."/>
            <person name="Dodgson J.B."/>
            <person name="Chinwalla A.T."/>
            <person name="Cliften P.F."/>
            <person name="Clifton S.W."/>
            <person name="Delehaunty K.D."/>
            <person name="Fronick C."/>
            <person name="Fulton R.S."/>
            <person name="Graves T.A."/>
            <person name="Kremitzki C."/>
            <person name="Layman D."/>
            <person name="Magrini V."/>
            <person name="McPherson J.D."/>
            <person name="Miner T.L."/>
            <person name="Minx P."/>
            <person name="Nash W.E."/>
            <person name="Nhan M.N."/>
            <person name="Nelson J.O."/>
            <person name="Oddy L.G."/>
            <person name="Pohl C.S."/>
            <person name="Randall-Maher J."/>
            <person name="Smith S.M."/>
            <person name="Wallis J.W."/>
            <person name="Yang S.-P."/>
            <person name="Romanov M.N."/>
            <person name="Rondelli C.M."/>
            <person name="Paton B."/>
            <person name="Smith J."/>
            <person name="Morrice D."/>
            <person name="Daniels L."/>
            <person name="Tempest H.G."/>
            <person name="Robertson L."/>
            <person name="Masabanda J.S."/>
            <person name="Griffin D.K."/>
            <person name="Vignal A."/>
            <person name="Fillon V."/>
            <person name="Jacobbson L."/>
            <person name="Kerje S."/>
            <person name="Andersson L."/>
            <person name="Crooijmans R.P."/>
            <person name="Aerts J."/>
            <person name="van der Poel J.J."/>
            <person name="Ellegren H."/>
            <person name="Caldwell R.B."/>
            <person name="Hubbard S.J."/>
            <person name="Grafham D.V."/>
            <person name="Kierzek A.M."/>
            <person name="McLaren S.R."/>
            <person name="Overton I.M."/>
            <person name="Arakawa H."/>
            <person name="Beattie K.J."/>
            <person name="Bezzubov Y."/>
            <person name="Boardman P.E."/>
            <person name="Bonfield J.K."/>
            <person name="Croning M.D.R."/>
            <person name="Davies R.M."/>
            <person name="Francis M.D."/>
            <person name="Humphray S.J."/>
            <person name="Scott C.E."/>
            <person name="Taylor R.G."/>
            <person name="Tickle C."/>
            <person name="Brown W.R.A."/>
            <person name="Rogers J."/>
            <person name="Buerstedde J.-M."/>
            <person name="Wilson S.A."/>
            <person name="Stubbs L."/>
            <person name="Ovcharenko I."/>
            <person name="Gordon L."/>
            <person name="Lucas S."/>
            <person name="Miller M.M."/>
            <person name="Inoko H."/>
            <person name="Shiina T."/>
            <person name="Kaufman J."/>
            <person name="Salomonsen J."/>
            <person name="Skjoedt K."/>
            <person name="Wong G.K.-S."/>
            <person name="Wang J."/>
            <person name="Liu B."/>
            <person name="Wang J."/>
            <person name="Yu J."/>
            <person name="Yang H."/>
            <person name="Nefedov M."/>
            <person name="Koriabine M."/>
            <person name="Dejong P.J."/>
            <person name="Goodstadt L."/>
            <person name="Webber C."/>
            <person name="Dickens N.J."/>
            <person name="Letunic I."/>
            <person name="Suyama M."/>
            <person name="Torrents D."/>
            <person name="von Mering C."/>
            <person name="Zdobnov E.M."/>
            <person name="Makova K."/>
            <person name="Nekrutenko A."/>
            <person name="Elnitski L."/>
            <person name="Eswara P."/>
            <person name="King D.C."/>
            <person name="Yang S.-P."/>
            <person name="Tyekucheva S."/>
            <person name="Radakrishnan A."/>
            <person name="Harris R.S."/>
            <person name="Chiaromonte F."/>
            <person name="Taylor J."/>
            <person name="He J."/>
            <person name="Rijnkels M."/>
            <person name="Griffiths-Jones S."/>
            <person name="Ureta-Vidal A."/>
            <person name="Hoffman M.M."/>
            <person name="Severin J."/>
            <person name="Searle S.M.J."/>
            <person name="Law A.S."/>
            <person name="Speed D."/>
            <person name="Waddington D."/>
            <person name="Cheng Z."/>
            <person name="Tuzun E."/>
            <person name="Eichler E."/>
            <person name="Bao Z."/>
            <person name="Flicek P."/>
            <person name="Shteynberg D.D."/>
            <person name="Brent M.R."/>
            <person name="Bye J.M."/>
            <person name="Huckle E.J."/>
            <person name="Chatterji S."/>
            <person name="Dewey C."/>
            <person name="Pachter L."/>
            <person name="Kouranov A."/>
            <person name="Mourelatos Z."/>
            <person name="Hatzigeorgiou A.G."/>
            <person name="Paterson A.H."/>
            <person name="Ivarie R."/>
            <person name="Brandstrom M."/>
            <person name="Axelsson E."/>
            <person name="Backstrom N."/>
            <person name="Berlin S."/>
            <person name="Webster M.T."/>
            <person name="Pourquie O."/>
            <person name="Reymond A."/>
            <person name="Ucla C."/>
            <person name="Antonarakis S.E."/>
            <person name="Long M."/>
            <person name="Emerson J.J."/>
            <person name="Betran E."/>
            <person name="Dupanloup I."/>
            <person name="Kaessmann H."/>
            <person name="Hinrichs A.S."/>
            <person name="Bejerano G."/>
            <person name="Furey T.S."/>
            <person name="Harte R.A."/>
            <person name="Raney B."/>
            <person name="Siepel A."/>
            <person name="Kent W.J."/>
            <person name="Haussler D."/>
            <person name="Eyras E."/>
            <person name="Castelo R."/>
            <person name="Abril J.F."/>
            <person name="Castellano S."/>
            <person name="Camara F."/>
            <person name="Parra G."/>
            <person name="Guigo R."/>
            <person name="Bourque G."/>
            <person name="Tesler G."/>
            <person name="Pevzner P.A."/>
            <person name="Smit A."/>
            <person name="Fulton L.A."/>
            <person name="Mardis E.R."/>
            <person name="Wilson R.K."/>
        </authorList>
    </citation>
    <scope>NUCLEOTIDE SEQUENCE [LARGE SCALE GENOMIC DNA]</scope>
    <source>
        <strain>Red jungle fowl</strain>
    </source>
</reference>
<reference key="4">
    <citation type="journal article" date="1989" name="Agric. Biol. Chem.">
        <title>Soluble and bound forms of aminopeptidase in hen's egg yolk.</title>
        <authorList>
            <person name="Ichishima E."/>
            <person name="Yamagata Y."/>
            <person name="Chiba H."/>
            <person name="Sawaguchi K."/>
            <person name="Tanaka T."/>
        </authorList>
    </citation>
    <scope>FUNCTION</scope>
    <scope>SUBCELLULAR LOCATION</scope>
    <scope>TISSUE SPECIFICITY</scope>
</reference>
<reference key="5">
    <citation type="journal article" date="1991" name="Agric. Biol. Chem.">
        <title>Electron microscopic analysis of dimeric form of aminopeptidase Ey from hen's egg yolk.</title>
        <authorList>
            <person name="Tanaka T."/>
            <person name="Oshida K."/>
            <person name="Ichishima E."/>
        </authorList>
    </citation>
    <scope>SUBUNIT</scope>
</reference>
<reference key="6">
    <citation type="journal article" date="1993" name="Comp. Biochem. Physiol.">
        <title>Substrate specificity of aminopeptidase Ey from hen's (Gallus domesticus) egg yolk.</title>
        <authorList>
            <person name="Tanaka T."/>
            <person name="Ichishima E."/>
        </authorList>
    </citation>
    <scope>FUNCTION</scope>
    <scope>CATALYTIC ACTIVITY</scope>
    <scope>BIOPHYSICOCHEMICAL PROPERTIES</scope>
</reference>
<reference key="7">
    <citation type="journal article" date="1993" name="Int. J. Biochem.">
        <title>Molecular properties of aminopeptidase Ey as a zinc-metalloenzyme.</title>
        <authorList>
            <person name="Tanaka T."/>
            <person name="Ichishima E."/>
        </authorList>
    </citation>
    <scope>COFACTOR</scope>
</reference>
<reference key="8">
    <citation type="journal article" date="1994" name="Comp. Biochem. Physiol.">
        <title>Inactivation of chemotactic peptides by aminopeptidase Ey from hen's (Gallus gallus domesticus) egg yolk.</title>
        <authorList>
            <person name="Tanaka T."/>
            <person name="Ichishima E."/>
        </authorList>
    </citation>
    <scope>FUNCTION</scope>
    <scope>CATALYTIC ACTIVITY</scope>
    <scope>BIOPHYSICOCHEMICAL PROPERTIES</scope>
</reference>
<feature type="initiator methionine" description="Removed" evidence="2">
    <location>
        <position position="1"/>
    </location>
</feature>
<feature type="chain" id="PRO_0000394749" description="Aminopeptidase Ey">
    <location>
        <begin position="2"/>
        <end position="972"/>
    </location>
</feature>
<feature type="topological domain" description="Cytoplasmic" evidence="3">
    <location>
        <begin position="2"/>
        <end position="10"/>
    </location>
</feature>
<feature type="transmembrane region" description="Helical; Signal-anchor for type II membrane protein" evidence="3">
    <location>
        <begin position="11"/>
        <end position="31"/>
    </location>
</feature>
<feature type="topological domain" description="Extracellular">
    <location>
        <begin position="32"/>
        <end position="972"/>
    </location>
</feature>
<feature type="region of interest" description="Cytosolic Ser/Thr-rich junction" evidence="2">
    <location>
        <begin position="33"/>
        <end position="72"/>
    </location>
</feature>
<feature type="region of interest" description="Disordered" evidence="5">
    <location>
        <begin position="37"/>
        <end position="77"/>
    </location>
</feature>
<feature type="region of interest" description="Metalloprotease" evidence="2">
    <location>
        <begin position="73"/>
        <end position="967"/>
    </location>
</feature>
<feature type="compositionally biased region" description="Low complexity" evidence="5">
    <location>
        <begin position="47"/>
        <end position="70"/>
    </location>
</feature>
<feature type="active site" description="Proton acceptor" evidence="4">
    <location>
        <position position="392"/>
    </location>
</feature>
<feature type="binding site" evidence="2">
    <location>
        <begin position="355"/>
        <end position="359"/>
    </location>
    <ligand>
        <name>substrate</name>
    </ligand>
</feature>
<feature type="binding site" evidence="4">
    <location>
        <position position="391"/>
    </location>
    <ligand>
        <name>Zn(2+)</name>
        <dbReference type="ChEBI" id="CHEBI:29105"/>
        <note>catalytic</note>
    </ligand>
</feature>
<feature type="binding site" evidence="4">
    <location>
        <position position="395"/>
    </location>
    <ligand>
        <name>Zn(2+)</name>
        <dbReference type="ChEBI" id="CHEBI:29105"/>
        <note>catalytic</note>
    </ligand>
</feature>
<feature type="binding site" evidence="4">
    <location>
        <position position="414"/>
    </location>
    <ligand>
        <name>Zn(2+)</name>
        <dbReference type="ChEBI" id="CHEBI:29105"/>
        <note>catalytic</note>
    </ligand>
</feature>
<feature type="site" description="Transition state stabilizer" evidence="2">
    <location>
        <position position="480"/>
    </location>
</feature>
<feature type="glycosylation site" description="N-linked (GlcNAc...) asparagine" evidence="3">
    <location>
        <position position="38"/>
    </location>
</feature>
<feature type="glycosylation site" description="N-linked (GlcNAc...) asparagine" evidence="3">
    <location>
        <position position="110"/>
    </location>
</feature>
<feature type="glycosylation site" description="N-linked (GlcNAc...) asparagine" evidence="3">
    <location>
        <position position="132"/>
    </location>
</feature>
<feature type="glycosylation site" description="N-linked (GlcNAc...) asparagine" evidence="3">
    <location>
        <position position="147"/>
    </location>
</feature>
<feature type="glycosylation site" description="N-linked (GlcNAc...) asparagine" evidence="3">
    <location>
        <position position="206"/>
    </location>
</feature>
<feature type="glycosylation site" description="N-linked (GlcNAc...) asparagine" evidence="3">
    <location>
        <position position="269"/>
    </location>
</feature>
<feature type="glycosylation site" description="N-linked (GlcNAc...) asparagine" evidence="3">
    <location>
        <position position="296"/>
    </location>
</feature>
<feature type="glycosylation site" description="N-linked (GlcNAc...) asparagine" evidence="3">
    <location>
        <position position="513"/>
    </location>
</feature>
<feature type="glycosylation site" description="N-linked (GlcNAc...) asparagine" evidence="3">
    <location>
        <position position="574"/>
    </location>
</feature>
<feature type="glycosylation site" description="N-linked (GlcNAc...) asparagine" evidence="3">
    <location>
        <position position="584"/>
    </location>
</feature>
<feature type="glycosylation site" description="N-linked (GlcNAc...) asparagine" evidence="3">
    <location>
        <position position="628"/>
    </location>
</feature>
<feature type="glycosylation site" description="N-linked (GlcNAc...) asparagine" evidence="3">
    <location>
        <position position="684"/>
    </location>
</feature>
<feature type="glycosylation site" description="N-linked (GlcNAc...) asparagine" evidence="3">
    <location>
        <position position="742"/>
    </location>
</feature>
<feature type="glycosylation site" description="N-linked (GlcNAc...) asparagine" evidence="3">
    <location>
        <position position="785"/>
    </location>
</feature>
<feature type="disulfide bond" evidence="1">
    <location>
        <begin position="764"/>
        <end position="771"/>
    </location>
</feature>
<feature type="disulfide bond" evidence="1">
    <location>
        <begin position="801"/>
        <end position="837"/>
    </location>
</feature>
<feature type="sequence conflict" description="In Ref. 1; BAA24263 and 2; ACZ95799." evidence="13" ref="1 2">
    <location>
        <begin position="56"/>
        <end position="60"/>
    </location>
</feature>
<feature type="sequence conflict" description="In Ref. 2; ACZ95799." evidence="13" ref="2">
    <original>T</original>
    <variation>K</variation>
    <location>
        <position position="248"/>
    </location>
</feature>
<feature type="sequence conflict" description="In Ref. 2; ACZ95799." evidence="13" ref="2">
    <original>V</original>
    <variation>A</variation>
    <location>
        <position position="255"/>
    </location>
</feature>
<feature type="sequence conflict" description="In Ref. 2; ACZ95799." evidence="13" ref="2">
    <original>S</original>
    <variation>T</variation>
    <location>
        <position position="538"/>
    </location>
</feature>
<feature type="sequence conflict" description="In Ref. 1; BAA24263 and 2; ACZ95799." evidence="13" ref="1 2">
    <original>D</original>
    <variation>N</variation>
    <location>
        <position position="614"/>
    </location>
</feature>
<feature type="sequence conflict" description="In Ref. 1; BAA24263." evidence="13" ref="1">
    <original>QQVS</original>
    <variation>HNVN</variation>
    <location>
        <begin position="675"/>
        <end position="678"/>
    </location>
</feature>
<feature type="sequence conflict" description="In Ref. 1; BAA24263." evidence="13" ref="1">
    <original>Q</original>
    <variation>H</variation>
    <location>
        <position position="923"/>
    </location>
</feature>